<feature type="chain" id="PRO_0000081398" description="Uncharacterized transcriptional regulatory protein YxjL">
    <location>
        <begin position="1"/>
        <end position="218"/>
    </location>
</feature>
<feature type="domain" description="Response regulatory" evidence="1">
    <location>
        <begin position="7"/>
        <end position="123"/>
    </location>
</feature>
<feature type="domain" description="HTH luxR-type" evidence="2">
    <location>
        <begin position="150"/>
        <end position="215"/>
    </location>
</feature>
<feature type="DNA-binding region" description="H-T-H motif" evidence="2">
    <location>
        <begin position="174"/>
        <end position="193"/>
    </location>
</feature>
<feature type="modified residue" description="4-aspartylphosphate" evidence="1">
    <location>
        <position position="58"/>
    </location>
</feature>
<feature type="sequence conflict" description="In Ref. 1; CAA67717." evidence="4" ref="1">
    <original>G</original>
    <variation>A</variation>
    <location>
        <position position="20"/>
    </location>
</feature>
<protein>
    <recommendedName>
        <fullName>Uncharacterized transcriptional regulatory protein YxjL</fullName>
    </recommendedName>
</protein>
<proteinExistence type="inferred from homology"/>
<dbReference type="EMBL" id="X99339">
    <property type="protein sequence ID" value="CAA67717.1"/>
    <property type="molecule type" value="Genomic_DNA"/>
</dbReference>
<dbReference type="EMBL" id="D83026">
    <property type="protein sequence ID" value="BAA11713.1"/>
    <property type="molecule type" value="Genomic_DNA"/>
</dbReference>
<dbReference type="EMBL" id="AL009126">
    <property type="protein sequence ID" value="CAB15917.1"/>
    <property type="molecule type" value="Genomic_DNA"/>
</dbReference>
<dbReference type="PIR" id="A70080">
    <property type="entry name" value="A70080"/>
</dbReference>
<dbReference type="RefSeq" id="NP_391770.1">
    <property type="nucleotide sequence ID" value="NC_000964.3"/>
</dbReference>
<dbReference type="RefSeq" id="WP_003243101.1">
    <property type="nucleotide sequence ID" value="NZ_OZ025638.1"/>
</dbReference>
<dbReference type="SMR" id="P55184"/>
<dbReference type="FunCoup" id="P55184">
    <property type="interactions" value="189"/>
</dbReference>
<dbReference type="STRING" id="224308.BSU38910"/>
<dbReference type="PaxDb" id="224308-BSU38910"/>
<dbReference type="EnsemblBacteria" id="CAB15917">
    <property type="protein sequence ID" value="CAB15917"/>
    <property type="gene ID" value="BSU_38910"/>
</dbReference>
<dbReference type="GeneID" id="937427"/>
<dbReference type="KEGG" id="bsu:BSU38910"/>
<dbReference type="PATRIC" id="fig|224308.179.peg.4210"/>
<dbReference type="eggNOG" id="COG2197">
    <property type="taxonomic scope" value="Bacteria"/>
</dbReference>
<dbReference type="InParanoid" id="P55184"/>
<dbReference type="OrthoDB" id="9780153at2"/>
<dbReference type="PhylomeDB" id="P55184"/>
<dbReference type="BioCyc" id="BSUB:BSU38910-MONOMER"/>
<dbReference type="Proteomes" id="UP000001570">
    <property type="component" value="Chromosome"/>
</dbReference>
<dbReference type="GO" id="GO:0005737">
    <property type="term" value="C:cytoplasm"/>
    <property type="evidence" value="ECO:0007669"/>
    <property type="project" value="UniProtKB-SubCell"/>
</dbReference>
<dbReference type="GO" id="GO:0003677">
    <property type="term" value="F:DNA binding"/>
    <property type="evidence" value="ECO:0007669"/>
    <property type="project" value="UniProtKB-KW"/>
</dbReference>
<dbReference type="GO" id="GO:0000160">
    <property type="term" value="P:phosphorelay signal transduction system"/>
    <property type="evidence" value="ECO:0007669"/>
    <property type="project" value="UniProtKB-KW"/>
</dbReference>
<dbReference type="GO" id="GO:0006355">
    <property type="term" value="P:regulation of DNA-templated transcription"/>
    <property type="evidence" value="ECO:0007669"/>
    <property type="project" value="InterPro"/>
</dbReference>
<dbReference type="CDD" id="cd06170">
    <property type="entry name" value="LuxR_C_like"/>
    <property type="match status" value="1"/>
</dbReference>
<dbReference type="CDD" id="cd17535">
    <property type="entry name" value="REC_NarL-like"/>
    <property type="match status" value="1"/>
</dbReference>
<dbReference type="Gene3D" id="3.40.50.2300">
    <property type="match status" value="1"/>
</dbReference>
<dbReference type="InterPro" id="IPR011006">
    <property type="entry name" value="CheY-like_superfamily"/>
</dbReference>
<dbReference type="InterPro" id="IPR016032">
    <property type="entry name" value="Sig_transdc_resp-reg_C-effctor"/>
</dbReference>
<dbReference type="InterPro" id="IPR001789">
    <property type="entry name" value="Sig_transdc_resp-reg_receiver"/>
</dbReference>
<dbReference type="InterPro" id="IPR000792">
    <property type="entry name" value="Tscrpt_reg_LuxR_C"/>
</dbReference>
<dbReference type="InterPro" id="IPR039420">
    <property type="entry name" value="WalR-like"/>
</dbReference>
<dbReference type="PANTHER" id="PTHR43214:SF24">
    <property type="entry name" value="TRANSCRIPTIONAL REGULATORY PROTEIN NARL-RELATED"/>
    <property type="match status" value="1"/>
</dbReference>
<dbReference type="PANTHER" id="PTHR43214">
    <property type="entry name" value="TWO-COMPONENT RESPONSE REGULATOR"/>
    <property type="match status" value="1"/>
</dbReference>
<dbReference type="Pfam" id="PF00196">
    <property type="entry name" value="GerE"/>
    <property type="match status" value="1"/>
</dbReference>
<dbReference type="Pfam" id="PF00072">
    <property type="entry name" value="Response_reg"/>
    <property type="match status" value="1"/>
</dbReference>
<dbReference type="PRINTS" id="PR00038">
    <property type="entry name" value="HTHLUXR"/>
</dbReference>
<dbReference type="SMART" id="SM00421">
    <property type="entry name" value="HTH_LUXR"/>
    <property type="match status" value="1"/>
</dbReference>
<dbReference type="SMART" id="SM00448">
    <property type="entry name" value="REC"/>
    <property type="match status" value="1"/>
</dbReference>
<dbReference type="SUPFAM" id="SSF46894">
    <property type="entry name" value="C-terminal effector domain of the bipartite response regulators"/>
    <property type="match status" value="1"/>
</dbReference>
<dbReference type="SUPFAM" id="SSF52172">
    <property type="entry name" value="CheY-like"/>
    <property type="match status" value="1"/>
</dbReference>
<dbReference type="PROSITE" id="PS00622">
    <property type="entry name" value="HTH_LUXR_1"/>
    <property type="match status" value="1"/>
</dbReference>
<dbReference type="PROSITE" id="PS50043">
    <property type="entry name" value="HTH_LUXR_2"/>
    <property type="match status" value="1"/>
</dbReference>
<dbReference type="PROSITE" id="PS50110">
    <property type="entry name" value="RESPONSE_REGULATORY"/>
    <property type="match status" value="1"/>
</dbReference>
<accession>P55184</accession>
<accession>P94354</accession>
<organism>
    <name type="scientific">Bacillus subtilis (strain 168)</name>
    <dbReference type="NCBI Taxonomy" id="224308"/>
    <lineage>
        <taxon>Bacteria</taxon>
        <taxon>Bacillati</taxon>
        <taxon>Bacillota</taxon>
        <taxon>Bacilli</taxon>
        <taxon>Bacillales</taxon>
        <taxon>Bacillaceae</taxon>
        <taxon>Bacillus</taxon>
    </lineage>
</organism>
<keyword id="KW-0963">Cytoplasm</keyword>
<keyword id="KW-0238">DNA-binding</keyword>
<keyword id="KW-0597">Phosphoprotein</keyword>
<keyword id="KW-1185">Reference proteome</keyword>
<keyword id="KW-0804">Transcription</keyword>
<keyword id="KW-0805">Transcription regulation</keyword>
<keyword id="KW-0902">Two-component regulatory system</keyword>
<sequence length="218" mass="24245">MNKDKIRVALADDQPLVREGFRYVINAQTDMTVSGEAGDGHDIIALAKQTKPDVILMDVQMPRCSGIEAAKDIMSALPNTKIVILTTFDTEEYVFEGIRAGAVGYLLKDTLPEELIDAIRAAARGEAIFRTVTAAKIISETFRAKQQTHAEELAEPFTKRELEVLQQMAYGLRNEDIAEKLFVSESTVKTHVHRILQKCNAQDRTQAVVFAIRNGIVQ</sequence>
<reference key="1">
    <citation type="journal article" date="1996" name="FEMS Microbiol. Lett.">
        <title>Expression of a pepT homologue from Bacillus subtilis.</title>
        <authorList>
            <person name="Schroegel O."/>
            <person name="Krispin O."/>
            <person name="Allmansberger R."/>
        </authorList>
    </citation>
    <scope>NUCLEOTIDE SEQUENCE [GENOMIC DNA]</scope>
    <source>
        <strain>168</strain>
    </source>
</reference>
<reference key="2">
    <citation type="journal article" date="1996" name="Microbiology">
        <title>Sequencing of a 65 kb region of the Bacillus subtilis genome containing the lic and cel loci, and creation of a 177 kb contig covering the gnt-sacXY region.</title>
        <authorList>
            <person name="Yoshida K."/>
            <person name="Shindo K."/>
            <person name="Sano H."/>
            <person name="Seki S."/>
            <person name="Fujimura M."/>
            <person name="Yanai N."/>
            <person name="Miwa Y."/>
            <person name="Fujita Y."/>
        </authorList>
    </citation>
    <scope>NUCLEOTIDE SEQUENCE [GENOMIC DNA]</scope>
    <source>
        <strain>168 / BGSC1A1</strain>
    </source>
</reference>
<reference key="3">
    <citation type="journal article" date="1997" name="Nature">
        <title>The complete genome sequence of the Gram-positive bacterium Bacillus subtilis.</title>
        <authorList>
            <person name="Kunst F."/>
            <person name="Ogasawara N."/>
            <person name="Moszer I."/>
            <person name="Albertini A.M."/>
            <person name="Alloni G."/>
            <person name="Azevedo V."/>
            <person name="Bertero M.G."/>
            <person name="Bessieres P."/>
            <person name="Bolotin A."/>
            <person name="Borchert S."/>
            <person name="Borriss R."/>
            <person name="Boursier L."/>
            <person name="Brans A."/>
            <person name="Braun M."/>
            <person name="Brignell S.C."/>
            <person name="Bron S."/>
            <person name="Brouillet S."/>
            <person name="Bruschi C.V."/>
            <person name="Caldwell B."/>
            <person name="Capuano V."/>
            <person name="Carter N.M."/>
            <person name="Choi S.-K."/>
            <person name="Codani J.-J."/>
            <person name="Connerton I.F."/>
            <person name="Cummings N.J."/>
            <person name="Daniel R.A."/>
            <person name="Denizot F."/>
            <person name="Devine K.M."/>
            <person name="Duesterhoeft A."/>
            <person name="Ehrlich S.D."/>
            <person name="Emmerson P.T."/>
            <person name="Entian K.-D."/>
            <person name="Errington J."/>
            <person name="Fabret C."/>
            <person name="Ferrari E."/>
            <person name="Foulger D."/>
            <person name="Fritz C."/>
            <person name="Fujita M."/>
            <person name="Fujita Y."/>
            <person name="Fuma S."/>
            <person name="Galizzi A."/>
            <person name="Galleron N."/>
            <person name="Ghim S.-Y."/>
            <person name="Glaser P."/>
            <person name="Goffeau A."/>
            <person name="Golightly E.J."/>
            <person name="Grandi G."/>
            <person name="Guiseppi G."/>
            <person name="Guy B.J."/>
            <person name="Haga K."/>
            <person name="Haiech J."/>
            <person name="Harwood C.R."/>
            <person name="Henaut A."/>
            <person name="Hilbert H."/>
            <person name="Holsappel S."/>
            <person name="Hosono S."/>
            <person name="Hullo M.-F."/>
            <person name="Itaya M."/>
            <person name="Jones L.-M."/>
            <person name="Joris B."/>
            <person name="Karamata D."/>
            <person name="Kasahara Y."/>
            <person name="Klaerr-Blanchard M."/>
            <person name="Klein C."/>
            <person name="Kobayashi Y."/>
            <person name="Koetter P."/>
            <person name="Koningstein G."/>
            <person name="Krogh S."/>
            <person name="Kumano M."/>
            <person name="Kurita K."/>
            <person name="Lapidus A."/>
            <person name="Lardinois S."/>
            <person name="Lauber J."/>
            <person name="Lazarevic V."/>
            <person name="Lee S.-M."/>
            <person name="Levine A."/>
            <person name="Liu H."/>
            <person name="Masuda S."/>
            <person name="Mauel C."/>
            <person name="Medigue C."/>
            <person name="Medina N."/>
            <person name="Mellado R.P."/>
            <person name="Mizuno M."/>
            <person name="Moestl D."/>
            <person name="Nakai S."/>
            <person name="Noback M."/>
            <person name="Noone D."/>
            <person name="O'Reilly M."/>
            <person name="Ogawa K."/>
            <person name="Ogiwara A."/>
            <person name="Oudega B."/>
            <person name="Park S.-H."/>
            <person name="Parro V."/>
            <person name="Pohl T.M."/>
            <person name="Portetelle D."/>
            <person name="Porwollik S."/>
            <person name="Prescott A.M."/>
            <person name="Presecan E."/>
            <person name="Pujic P."/>
            <person name="Purnelle B."/>
            <person name="Rapoport G."/>
            <person name="Rey M."/>
            <person name="Reynolds S."/>
            <person name="Rieger M."/>
            <person name="Rivolta C."/>
            <person name="Rocha E."/>
            <person name="Roche B."/>
            <person name="Rose M."/>
            <person name="Sadaie Y."/>
            <person name="Sato T."/>
            <person name="Scanlan E."/>
            <person name="Schleich S."/>
            <person name="Schroeter R."/>
            <person name="Scoffone F."/>
            <person name="Sekiguchi J."/>
            <person name="Sekowska A."/>
            <person name="Seror S.J."/>
            <person name="Serror P."/>
            <person name="Shin B.-S."/>
            <person name="Soldo B."/>
            <person name="Sorokin A."/>
            <person name="Tacconi E."/>
            <person name="Takagi T."/>
            <person name="Takahashi H."/>
            <person name="Takemaru K."/>
            <person name="Takeuchi M."/>
            <person name="Tamakoshi A."/>
            <person name="Tanaka T."/>
            <person name="Terpstra P."/>
            <person name="Tognoni A."/>
            <person name="Tosato V."/>
            <person name="Uchiyama S."/>
            <person name="Vandenbol M."/>
            <person name="Vannier F."/>
            <person name="Vassarotti A."/>
            <person name="Viari A."/>
            <person name="Wambutt R."/>
            <person name="Wedler E."/>
            <person name="Wedler H."/>
            <person name="Weitzenegger T."/>
            <person name="Winters P."/>
            <person name="Wipat A."/>
            <person name="Yamamoto H."/>
            <person name="Yamane K."/>
            <person name="Yasumoto K."/>
            <person name="Yata K."/>
            <person name="Yoshida K."/>
            <person name="Yoshikawa H.-F."/>
            <person name="Zumstein E."/>
            <person name="Yoshikawa H."/>
            <person name="Danchin A."/>
        </authorList>
    </citation>
    <scope>NUCLEOTIDE SEQUENCE [LARGE SCALE GENOMIC DNA]</scope>
    <source>
        <strain>168</strain>
    </source>
</reference>
<reference key="4">
    <citation type="journal article" date="2001" name="J. Bacteriol.">
        <title>Comprehensive DNA microarray analysis of Bacillus subtilis two-component regulatory systems.</title>
        <authorList>
            <person name="Kobayashi K."/>
            <person name="Ogura M."/>
            <person name="Yamaguchi H."/>
            <person name="Yoshida K."/>
            <person name="Ogasawara N."/>
            <person name="Tanaka T."/>
            <person name="Fujita Y."/>
        </authorList>
    </citation>
    <scope>FUNCTION</scope>
</reference>
<name>YXJL_BACSU</name>
<evidence type="ECO:0000255" key="1">
    <source>
        <dbReference type="PROSITE-ProRule" id="PRU00169"/>
    </source>
</evidence>
<evidence type="ECO:0000255" key="2">
    <source>
        <dbReference type="PROSITE-ProRule" id="PRU00411"/>
    </source>
</evidence>
<evidence type="ECO:0000269" key="3">
    <source>
    </source>
</evidence>
<evidence type="ECO:0000305" key="4"/>
<gene>
    <name type="primary">yxjL</name>
    <name type="ordered locus">BSU38910</name>
</gene>
<comment type="function">
    <text evidence="3">Probable member of the two-component regulatory system YxjM/YxjL.</text>
</comment>
<comment type="subcellular location">
    <subcellularLocation>
        <location evidence="4">Cytoplasm</location>
    </subcellularLocation>
</comment>
<comment type="PTM">
    <text evidence="4">Phosphorylated by YxjM.</text>
</comment>